<accession>B5QW68</accession>
<gene>
    <name evidence="1" type="primary">metE</name>
    <name type="ordered locus">SEN3760</name>
</gene>
<feature type="chain" id="PRO_1000097839" description="5-methyltetrahydropteroyltriglutamate--homocysteine methyltransferase">
    <location>
        <begin position="1"/>
        <end position="754"/>
    </location>
</feature>
<feature type="active site" description="Proton donor" evidence="1">
    <location>
        <position position="694"/>
    </location>
</feature>
<feature type="binding site" evidence="1">
    <location>
        <begin position="17"/>
        <end position="20"/>
    </location>
    <ligand>
        <name>5-methyltetrahydropteroyltri-L-glutamate</name>
        <dbReference type="ChEBI" id="CHEBI:58207"/>
    </ligand>
</feature>
<feature type="binding site" evidence="1">
    <location>
        <position position="117"/>
    </location>
    <ligand>
        <name>5-methyltetrahydropteroyltri-L-glutamate</name>
        <dbReference type="ChEBI" id="CHEBI:58207"/>
    </ligand>
</feature>
<feature type="binding site" evidence="1">
    <location>
        <begin position="431"/>
        <end position="433"/>
    </location>
    <ligand>
        <name>L-homocysteine</name>
        <dbReference type="ChEBI" id="CHEBI:58199"/>
    </ligand>
</feature>
<feature type="binding site" evidence="1">
    <location>
        <begin position="431"/>
        <end position="433"/>
    </location>
    <ligand>
        <name>L-methionine</name>
        <dbReference type="ChEBI" id="CHEBI:57844"/>
    </ligand>
</feature>
<feature type="binding site" evidence="1">
    <location>
        <position position="484"/>
    </location>
    <ligand>
        <name>L-homocysteine</name>
        <dbReference type="ChEBI" id="CHEBI:58199"/>
    </ligand>
</feature>
<feature type="binding site" evidence="1">
    <location>
        <position position="484"/>
    </location>
    <ligand>
        <name>L-methionine</name>
        <dbReference type="ChEBI" id="CHEBI:57844"/>
    </ligand>
</feature>
<feature type="binding site" evidence="1">
    <location>
        <begin position="515"/>
        <end position="516"/>
    </location>
    <ligand>
        <name>5-methyltetrahydropteroyltri-L-glutamate</name>
        <dbReference type="ChEBI" id="CHEBI:58207"/>
    </ligand>
</feature>
<feature type="binding site" evidence="1">
    <location>
        <position position="561"/>
    </location>
    <ligand>
        <name>5-methyltetrahydropteroyltri-L-glutamate</name>
        <dbReference type="ChEBI" id="CHEBI:58207"/>
    </ligand>
</feature>
<feature type="binding site" evidence="1">
    <location>
        <position position="599"/>
    </location>
    <ligand>
        <name>L-homocysteine</name>
        <dbReference type="ChEBI" id="CHEBI:58199"/>
    </ligand>
</feature>
<feature type="binding site" evidence="1">
    <location>
        <position position="599"/>
    </location>
    <ligand>
        <name>L-methionine</name>
        <dbReference type="ChEBI" id="CHEBI:57844"/>
    </ligand>
</feature>
<feature type="binding site" evidence="1">
    <location>
        <position position="605"/>
    </location>
    <ligand>
        <name>5-methyltetrahydropteroyltri-L-glutamate</name>
        <dbReference type="ChEBI" id="CHEBI:58207"/>
    </ligand>
</feature>
<feature type="binding site" evidence="1">
    <location>
        <position position="641"/>
    </location>
    <ligand>
        <name>Zn(2+)</name>
        <dbReference type="ChEBI" id="CHEBI:29105"/>
        <note>catalytic</note>
    </ligand>
</feature>
<feature type="binding site" evidence="1">
    <location>
        <position position="643"/>
    </location>
    <ligand>
        <name>Zn(2+)</name>
        <dbReference type="ChEBI" id="CHEBI:29105"/>
        <note>catalytic</note>
    </ligand>
</feature>
<feature type="binding site" evidence="1">
    <location>
        <position position="665"/>
    </location>
    <ligand>
        <name>Zn(2+)</name>
        <dbReference type="ChEBI" id="CHEBI:29105"/>
        <note>catalytic</note>
    </ligand>
</feature>
<feature type="binding site" evidence="1">
    <location>
        <position position="726"/>
    </location>
    <ligand>
        <name>Zn(2+)</name>
        <dbReference type="ChEBI" id="CHEBI:29105"/>
        <note>catalytic</note>
    </ligand>
</feature>
<evidence type="ECO:0000255" key="1">
    <source>
        <dbReference type="HAMAP-Rule" id="MF_00172"/>
    </source>
</evidence>
<keyword id="KW-0028">Amino-acid biosynthesis</keyword>
<keyword id="KW-0479">Metal-binding</keyword>
<keyword id="KW-0486">Methionine biosynthesis</keyword>
<keyword id="KW-0489">Methyltransferase</keyword>
<keyword id="KW-0677">Repeat</keyword>
<keyword id="KW-0808">Transferase</keyword>
<keyword id="KW-0862">Zinc</keyword>
<organism>
    <name type="scientific">Salmonella enteritidis PT4 (strain P125109)</name>
    <dbReference type="NCBI Taxonomy" id="550537"/>
    <lineage>
        <taxon>Bacteria</taxon>
        <taxon>Pseudomonadati</taxon>
        <taxon>Pseudomonadota</taxon>
        <taxon>Gammaproteobacteria</taxon>
        <taxon>Enterobacterales</taxon>
        <taxon>Enterobacteriaceae</taxon>
        <taxon>Salmonella</taxon>
    </lineage>
</organism>
<protein>
    <recommendedName>
        <fullName evidence="1">5-methyltetrahydropteroyltriglutamate--homocysteine methyltransferase</fullName>
        <ecNumber evidence="1">2.1.1.14</ecNumber>
    </recommendedName>
    <alternativeName>
        <fullName evidence="1">Cobalamin-independent methionine synthase</fullName>
    </alternativeName>
    <alternativeName>
        <fullName evidence="1">Methionine synthase, vitamin-B12 independent isozyme</fullName>
    </alternativeName>
</protein>
<sequence length="754" mass="84573">MTILTHTLGFPRVGLRRELKKAQESYWAGNSTREALLAVGRELRARHWEQQKQAGIDLLPVGDFAWYDHVLTTSLLLGNVPARHQNNDGSVDIDTLFRIGRGRAPTGEPAAAAEMTKWFNTNYHYIVPEFSKGQQFRLTWTQLLEEVDEALALGHKIKPVLLGPVTYLWLGKVKGEPFDRLTLLKDILPVYQHVLAELAKRGVEWVQIDEPALVLELPQAWLDAFKPAYDALAGQVKLLLTTYFEGVTPNLDTIIALPVQGLHVDLIHGKDDVAELHQRLPVDWLLSAGLINGRNVWRADLTEKYAQINAIVGKRALWVASSCSLLHSPIDLSVETRLDTEVKSWFAFALQKCGELALLRDALNSGETAALEEWSAPIQARRHSRRVHNAAVEKRLAAITAQASQRENPYEVRAEAQRARFKLPAWPTTTIGSFPQTTEIRGLRLDFKKGNLDANNYRTGIAEHIKQAIIEQERLGLDVLVHGEAERNDMVEYFGEHLDGFVFTQNGWVQSYGSRCVKPPVVIGDISRPAPITVEWAKYAQSLTDKPVKGMLTGPVTILCWSFPREDVTRETIAKQIALALRDEVADLEAAGIGIIQIDEPALREGLPLRRSDWDAYLEWGVEAFRINAAVAKDETQIHTHMCYCEFNDIMDSIAALDADVITIETSRSDMELLESFEAFDYPNEIGPGVYDIHSPNVPSVEWIEALLKKAAQRIPAQRLWVNPDCGLKTRGWPETRAALANMVKAAHNLRQAK</sequence>
<comment type="function">
    <text evidence="1">Catalyzes the transfer of a methyl group from 5-methyltetrahydrofolate to homocysteine resulting in methionine formation.</text>
</comment>
<comment type="catalytic activity">
    <reaction evidence="1">
        <text>5-methyltetrahydropteroyltri-L-glutamate + L-homocysteine = tetrahydropteroyltri-L-glutamate + L-methionine</text>
        <dbReference type="Rhea" id="RHEA:21196"/>
        <dbReference type="ChEBI" id="CHEBI:57844"/>
        <dbReference type="ChEBI" id="CHEBI:58140"/>
        <dbReference type="ChEBI" id="CHEBI:58199"/>
        <dbReference type="ChEBI" id="CHEBI:58207"/>
        <dbReference type="EC" id="2.1.1.14"/>
    </reaction>
</comment>
<comment type="cofactor">
    <cofactor evidence="1">
        <name>Zn(2+)</name>
        <dbReference type="ChEBI" id="CHEBI:29105"/>
    </cofactor>
    <text evidence="1">Binds 1 zinc ion per subunit.</text>
</comment>
<comment type="pathway">
    <text evidence="1">Amino-acid biosynthesis; L-methionine biosynthesis via de novo pathway; L-methionine from L-homocysteine (MetE route): step 1/1.</text>
</comment>
<comment type="similarity">
    <text evidence="1">Belongs to the vitamin-B12 independent methionine synthase family.</text>
</comment>
<proteinExistence type="inferred from homology"/>
<reference key="1">
    <citation type="journal article" date="2008" name="Genome Res.">
        <title>Comparative genome analysis of Salmonella enteritidis PT4 and Salmonella gallinarum 287/91 provides insights into evolutionary and host adaptation pathways.</title>
        <authorList>
            <person name="Thomson N.R."/>
            <person name="Clayton D.J."/>
            <person name="Windhorst D."/>
            <person name="Vernikos G."/>
            <person name="Davidson S."/>
            <person name="Churcher C."/>
            <person name="Quail M.A."/>
            <person name="Stevens M."/>
            <person name="Jones M.A."/>
            <person name="Watson M."/>
            <person name="Barron A."/>
            <person name="Layton A."/>
            <person name="Pickard D."/>
            <person name="Kingsley R.A."/>
            <person name="Bignell A."/>
            <person name="Clark L."/>
            <person name="Harris B."/>
            <person name="Ormond D."/>
            <person name="Abdellah Z."/>
            <person name="Brooks K."/>
            <person name="Cherevach I."/>
            <person name="Chillingworth T."/>
            <person name="Woodward J."/>
            <person name="Norberczak H."/>
            <person name="Lord A."/>
            <person name="Arrowsmith C."/>
            <person name="Jagels K."/>
            <person name="Moule S."/>
            <person name="Mungall K."/>
            <person name="Saunders M."/>
            <person name="Whitehead S."/>
            <person name="Chabalgoity J.A."/>
            <person name="Maskell D."/>
            <person name="Humphreys T."/>
            <person name="Roberts M."/>
            <person name="Barrow P.A."/>
            <person name="Dougan G."/>
            <person name="Parkhill J."/>
        </authorList>
    </citation>
    <scope>NUCLEOTIDE SEQUENCE [LARGE SCALE GENOMIC DNA]</scope>
    <source>
        <strain>P125109</strain>
    </source>
</reference>
<name>METE_SALEP</name>
<dbReference type="EC" id="2.1.1.14" evidence="1"/>
<dbReference type="EMBL" id="AM933172">
    <property type="protein sequence ID" value="CAR35336.1"/>
    <property type="molecule type" value="Genomic_DNA"/>
</dbReference>
<dbReference type="RefSeq" id="WP_000154187.1">
    <property type="nucleotide sequence ID" value="NC_011294.1"/>
</dbReference>
<dbReference type="SMR" id="B5QW68"/>
<dbReference type="KEGG" id="set:SEN3760"/>
<dbReference type="HOGENOM" id="CLU_013175_0_0_6"/>
<dbReference type="UniPathway" id="UPA00051">
    <property type="reaction ID" value="UER00082"/>
</dbReference>
<dbReference type="Proteomes" id="UP000000613">
    <property type="component" value="Chromosome"/>
</dbReference>
<dbReference type="GO" id="GO:0003871">
    <property type="term" value="F:5-methyltetrahydropteroyltriglutamate-homocysteine S-methyltransferase activity"/>
    <property type="evidence" value="ECO:0007669"/>
    <property type="project" value="UniProtKB-UniRule"/>
</dbReference>
<dbReference type="GO" id="GO:0008270">
    <property type="term" value="F:zinc ion binding"/>
    <property type="evidence" value="ECO:0007669"/>
    <property type="project" value="InterPro"/>
</dbReference>
<dbReference type="GO" id="GO:0009086">
    <property type="term" value="P:methionine biosynthetic process"/>
    <property type="evidence" value="ECO:0007669"/>
    <property type="project" value="UniProtKB-UniRule"/>
</dbReference>
<dbReference type="GO" id="GO:0032259">
    <property type="term" value="P:methylation"/>
    <property type="evidence" value="ECO:0007669"/>
    <property type="project" value="UniProtKB-KW"/>
</dbReference>
<dbReference type="CDD" id="cd03311">
    <property type="entry name" value="CIMS_C_terminal_like"/>
    <property type="match status" value="1"/>
</dbReference>
<dbReference type="CDD" id="cd03312">
    <property type="entry name" value="CIMS_N_terminal_like"/>
    <property type="match status" value="1"/>
</dbReference>
<dbReference type="FunFam" id="3.20.20.210:FF:000002">
    <property type="entry name" value="5-methyltetrahydropteroyltriglutamate--homocysteine methyltransferase"/>
    <property type="match status" value="1"/>
</dbReference>
<dbReference type="FunFam" id="3.20.20.210:FF:000003">
    <property type="entry name" value="5-methyltetrahydropteroyltriglutamate--homocysteine methyltransferase"/>
    <property type="match status" value="1"/>
</dbReference>
<dbReference type="Gene3D" id="3.20.20.210">
    <property type="match status" value="2"/>
</dbReference>
<dbReference type="HAMAP" id="MF_00172">
    <property type="entry name" value="Meth_synth"/>
    <property type="match status" value="1"/>
</dbReference>
<dbReference type="InterPro" id="IPR013215">
    <property type="entry name" value="Cbl-indep_Met_Synth_N"/>
</dbReference>
<dbReference type="InterPro" id="IPR006276">
    <property type="entry name" value="Cobalamin-indep_Met_synthase"/>
</dbReference>
<dbReference type="InterPro" id="IPR002629">
    <property type="entry name" value="Met_Synth_C/arc"/>
</dbReference>
<dbReference type="InterPro" id="IPR038071">
    <property type="entry name" value="UROD/MetE-like_sf"/>
</dbReference>
<dbReference type="NCBIfam" id="TIGR01371">
    <property type="entry name" value="met_syn_B12ind"/>
    <property type="match status" value="1"/>
</dbReference>
<dbReference type="NCBIfam" id="NF003556">
    <property type="entry name" value="PRK05222.1"/>
    <property type="match status" value="1"/>
</dbReference>
<dbReference type="PANTHER" id="PTHR30519">
    <property type="entry name" value="5-METHYLTETRAHYDROPTEROYLTRIGLUTAMATE--HOMOCYSTEINE METHYLTRANSFERASE"/>
    <property type="match status" value="1"/>
</dbReference>
<dbReference type="Pfam" id="PF08267">
    <property type="entry name" value="Meth_synt_1"/>
    <property type="match status" value="1"/>
</dbReference>
<dbReference type="Pfam" id="PF01717">
    <property type="entry name" value="Meth_synt_2"/>
    <property type="match status" value="1"/>
</dbReference>
<dbReference type="PIRSF" id="PIRSF000382">
    <property type="entry name" value="MeTrfase_B12_ind"/>
    <property type="match status" value="1"/>
</dbReference>
<dbReference type="SUPFAM" id="SSF51726">
    <property type="entry name" value="UROD/MetE-like"/>
    <property type="match status" value="2"/>
</dbReference>